<name>YACL_ECOL5</name>
<gene>
    <name evidence="1" type="primary">yacL</name>
    <name type="ordered locus">ECP_0126</name>
</gene>
<dbReference type="EMBL" id="CP000247">
    <property type="protein sequence ID" value="ABG68166.1"/>
    <property type="molecule type" value="Genomic_DNA"/>
</dbReference>
<dbReference type="RefSeq" id="WP_001346485.1">
    <property type="nucleotide sequence ID" value="NC_008253.1"/>
</dbReference>
<dbReference type="KEGG" id="ecp:ECP_0126"/>
<dbReference type="HOGENOM" id="CLU_139226_0_0_6"/>
<dbReference type="Proteomes" id="UP000009182">
    <property type="component" value="Chromosome"/>
</dbReference>
<dbReference type="HAMAP" id="MF_01053">
    <property type="entry name" value="UPF0231"/>
    <property type="match status" value="1"/>
</dbReference>
<dbReference type="InterPro" id="IPR008249">
    <property type="entry name" value="UPF0231"/>
</dbReference>
<dbReference type="NCBIfam" id="NF003574">
    <property type="entry name" value="PRK05248.1-1"/>
    <property type="match status" value="1"/>
</dbReference>
<dbReference type="NCBIfam" id="NF003576">
    <property type="entry name" value="PRK05248.1-3"/>
    <property type="match status" value="1"/>
</dbReference>
<dbReference type="Pfam" id="PF06062">
    <property type="entry name" value="UPF0231"/>
    <property type="match status" value="1"/>
</dbReference>
<dbReference type="PIRSF" id="PIRSF006287">
    <property type="entry name" value="UCP006287"/>
    <property type="match status" value="1"/>
</dbReference>
<feature type="chain" id="PRO_1000064359" description="UPF0231 protein YacL">
    <location>
        <begin position="1"/>
        <end position="120"/>
    </location>
</feature>
<reference key="1">
    <citation type="journal article" date="2006" name="Mol. Microbiol.">
        <title>Role of pathogenicity island-associated integrases in the genome plasticity of uropathogenic Escherichia coli strain 536.</title>
        <authorList>
            <person name="Hochhut B."/>
            <person name="Wilde C."/>
            <person name="Balling G."/>
            <person name="Middendorf B."/>
            <person name="Dobrindt U."/>
            <person name="Brzuszkiewicz E."/>
            <person name="Gottschalk G."/>
            <person name="Carniel E."/>
            <person name="Hacker J."/>
        </authorList>
    </citation>
    <scope>NUCLEOTIDE SEQUENCE [LARGE SCALE GENOMIC DNA]</scope>
    <source>
        <strain>536 / UPEC</strain>
    </source>
</reference>
<sequence length="120" mass="13992">MDYEFLRDITGVVKVRMSMGHEVIGHWFNEEVKENLALLDEVEDAARTLKGSERSWQRAGHEYTLWMDGEEVMVRANQLEFAGDEMEEGMNYYDEESLSLCGVEDFLQVVAAYRNFVQQK</sequence>
<organism>
    <name type="scientific">Escherichia coli O6:K15:H31 (strain 536 / UPEC)</name>
    <dbReference type="NCBI Taxonomy" id="362663"/>
    <lineage>
        <taxon>Bacteria</taxon>
        <taxon>Pseudomonadati</taxon>
        <taxon>Pseudomonadota</taxon>
        <taxon>Gammaproteobacteria</taxon>
        <taxon>Enterobacterales</taxon>
        <taxon>Enterobacteriaceae</taxon>
        <taxon>Escherichia</taxon>
    </lineage>
</organism>
<proteinExistence type="inferred from homology"/>
<protein>
    <recommendedName>
        <fullName evidence="1">UPF0231 protein YacL</fullName>
    </recommendedName>
</protein>
<evidence type="ECO:0000255" key="1">
    <source>
        <dbReference type="HAMAP-Rule" id="MF_01053"/>
    </source>
</evidence>
<comment type="similarity">
    <text evidence="1">Belongs to the UPF0231 family.</text>
</comment>
<accession>Q0TLL5</accession>